<accession>C0R2N9</accession>
<name>Y3770_WOLWR</name>
<comment type="similarity">
    <text evidence="1">Belongs to the UPF0335 family.</text>
</comment>
<proteinExistence type="inferred from homology"/>
<evidence type="ECO:0000255" key="1">
    <source>
        <dbReference type="HAMAP-Rule" id="MF_00797"/>
    </source>
</evidence>
<sequence>MEDTVKITAEELKGYIERIEKLEQEKRDVQDHIRDVYAKATDEGWDIKVMKQIIRLRKMDDDDREEQEILLDTYKRALGMSYEEELSE</sequence>
<gene>
    <name type="ordered locus">WRi_003770</name>
</gene>
<feature type="chain" id="PRO_1000148525" description="UPF0335 protein WRi_003770">
    <location>
        <begin position="1"/>
        <end position="88"/>
    </location>
</feature>
<dbReference type="EMBL" id="CP001391">
    <property type="protein sequence ID" value="ACN95181.1"/>
    <property type="molecule type" value="Genomic_DNA"/>
</dbReference>
<dbReference type="RefSeq" id="WP_007549014.1">
    <property type="nucleotide sequence ID" value="NZ_MKIF01000175.1"/>
</dbReference>
<dbReference type="SMR" id="C0R2N9"/>
<dbReference type="STRING" id="66084.WRi_003770"/>
<dbReference type="KEGG" id="wri:WRi_003770"/>
<dbReference type="HOGENOM" id="CLU_158651_3_0_5"/>
<dbReference type="Proteomes" id="UP000001293">
    <property type="component" value="Chromosome"/>
</dbReference>
<dbReference type="GO" id="GO:0003677">
    <property type="term" value="F:DNA binding"/>
    <property type="evidence" value="ECO:0007669"/>
    <property type="project" value="InterPro"/>
</dbReference>
<dbReference type="HAMAP" id="MF_00797">
    <property type="entry name" value="UPF0335"/>
    <property type="match status" value="1"/>
</dbReference>
<dbReference type="InterPro" id="IPR018753">
    <property type="entry name" value="GapR-like"/>
</dbReference>
<dbReference type="InterPro" id="IPR046367">
    <property type="entry name" value="GapR-like_DNA-bd"/>
</dbReference>
<dbReference type="NCBIfam" id="NF010247">
    <property type="entry name" value="PRK13694.1"/>
    <property type="match status" value="1"/>
</dbReference>
<dbReference type="Pfam" id="PF10073">
    <property type="entry name" value="GapR_DNA-bd"/>
    <property type="match status" value="1"/>
</dbReference>
<reference key="1">
    <citation type="journal article" date="2009" name="Proc. Natl. Acad. Sci. U.S.A.">
        <title>The mosaic genome structure of the Wolbachia wRi strain infecting Drosophila simulans.</title>
        <authorList>
            <person name="Klasson L."/>
            <person name="Westberg J."/>
            <person name="Sapountzis P."/>
            <person name="Naeslund K."/>
            <person name="Lutnaes Y."/>
            <person name="Darby A.C."/>
            <person name="Veneti Z."/>
            <person name="Chen L."/>
            <person name="Braig H.R."/>
            <person name="Garrett R."/>
            <person name="Bourtzis K."/>
            <person name="Andersson S.G."/>
        </authorList>
    </citation>
    <scope>NUCLEOTIDE SEQUENCE [LARGE SCALE GENOMIC DNA]</scope>
    <source>
        <strain>wRi</strain>
    </source>
</reference>
<protein>
    <recommendedName>
        <fullName evidence="1">UPF0335 protein WRi_003770</fullName>
    </recommendedName>
</protein>
<organism>
    <name type="scientific">Wolbachia sp. subsp. Drosophila simulans (strain wRi)</name>
    <dbReference type="NCBI Taxonomy" id="66084"/>
    <lineage>
        <taxon>Bacteria</taxon>
        <taxon>Pseudomonadati</taxon>
        <taxon>Pseudomonadota</taxon>
        <taxon>Alphaproteobacteria</taxon>
        <taxon>Rickettsiales</taxon>
        <taxon>Anaplasmataceae</taxon>
        <taxon>Wolbachieae</taxon>
        <taxon>Wolbachia</taxon>
    </lineage>
</organism>